<sequence length="1190" mass="133412">MTGRLVQYGRHRQRRSYARISEVLELPNLIEIQTSSYQWFLDEGLREMFKEISPIEDFSGNLSLEFIDYSLGEPKYSVEEAKERDVTYAAPLRVKVRLINKETGEVKEQDVFMGDFPLMTETGTFIINGAERVIVSQLVRSPSVYYSDKVDKNGKRGYSATVIPNRGAWLEYETDAKDVVYVRIDRTRKLPVTVLLRALGFSSDQEIIDLLGDNEYLRNTLEKDNTDSTEKALIEIYERLRPGEPPTLENAKSLLASRFFDPKRYDLASVGRYKINKKLHIKNRLFNQRLAETIADPETGEIIAEAGTMIDRRTLNRLLPYLEKGAGLQTYRPTEGVADGQISVQTVKIYAPNDPDNEKVINIIGNGFIAEDVKHITPADIIASISYFFNLLHGVGDTDDIDHLGNRRLRSVGELLQNQFRIGLSRMERVVRERMSIQDANTITPQQLINIRPVIAAIKEFFGSSQLSQFMDQTNPLAELTHKRRLSALGPGGLTRERAGFEVRDVHYSHYGRMCPIETPEGPNIGLINSLSTYAKVNKFGFIETPYRRVDPETGKVTDQIDYLTADEEDNYVVAQANVPLAEDGTFLEENVIARFRGENIVVKRDRVDYMDVSPKQVVSAATACIPFLENDDSNRALMGANMQRQAVPLLQPEAPIVGTGMEYVSAKDSGAAIICKHRGIVERVEAKEIWVRRLIEVDGKEVKGDLDKYRLLKFVRSNQGTCYNQRPIVKKGDIVEKGEILADGPSMDKGELALGRNVLVAFMTWDGYNYEDAIIMSERLVKEDVYTSIHIEEYEAESRDTKLGPEEITRDIPNVGEDALKNLDERGIVRIGAEVKDGDLLVGKVTPKGMTELTAEERLLHAIFGEKAREVRDTSLRVPHGGGGIVLDVKVFNREDGDELPPGVNQLVRVYIVQKRKISEGDKMAGRHGNKGVISRILPEEDMPFLPDGTPIDIMLNPLGVPSRMNIGQVFELHLGMAAKKLGLHIASPVFDGATEEDVWNILEEAGMARDAKTVLYDGRTGEPFDNRVSVGIMYMIKLAHMVDDKLHARSTGPYSLVTQQPLGGKAQFGGQRFGEMEVWALEAYGAAYTLQEILTVKSDDVVGRVKTYEAIVKGENIPEPGVPESFKVLIKELQSLGMDVTILTSDEQEINMENFDDDDDHAPDAIMVDVKPVESEEADEEKNAVTKE</sequence>
<dbReference type="EC" id="2.7.7.6" evidence="1"/>
<dbReference type="EMBL" id="CP000557">
    <property type="protein sequence ID" value="ABO65485.1"/>
    <property type="molecule type" value="Genomic_DNA"/>
</dbReference>
<dbReference type="RefSeq" id="WP_008881953.1">
    <property type="nucleotide sequence ID" value="NC_009328.1"/>
</dbReference>
<dbReference type="SMR" id="A4IJI1"/>
<dbReference type="KEGG" id="gtn:GTNG_0098"/>
<dbReference type="eggNOG" id="COG0085">
    <property type="taxonomic scope" value="Bacteria"/>
</dbReference>
<dbReference type="HOGENOM" id="CLU_000524_4_1_9"/>
<dbReference type="Proteomes" id="UP000001578">
    <property type="component" value="Chromosome"/>
</dbReference>
<dbReference type="GO" id="GO:0000428">
    <property type="term" value="C:DNA-directed RNA polymerase complex"/>
    <property type="evidence" value="ECO:0007669"/>
    <property type="project" value="UniProtKB-KW"/>
</dbReference>
<dbReference type="GO" id="GO:0003677">
    <property type="term" value="F:DNA binding"/>
    <property type="evidence" value="ECO:0007669"/>
    <property type="project" value="UniProtKB-UniRule"/>
</dbReference>
<dbReference type="GO" id="GO:0003899">
    <property type="term" value="F:DNA-directed RNA polymerase activity"/>
    <property type="evidence" value="ECO:0007669"/>
    <property type="project" value="UniProtKB-UniRule"/>
</dbReference>
<dbReference type="GO" id="GO:0032549">
    <property type="term" value="F:ribonucleoside binding"/>
    <property type="evidence" value="ECO:0007669"/>
    <property type="project" value="InterPro"/>
</dbReference>
<dbReference type="GO" id="GO:0006351">
    <property type="term" value="P:DNA-templated transcription"/>
    <property type="evidence" value="ECO:0007669"/>
    <property type="project" value="UniProtKB-UniRule"/>
</dbReference>
<dbReference type="CDD" id="cd00653">
    <property type="entry name" value="RNA_pol_B_RPB2"/>
    <property type="match status" value="1"/>
</dbReference>
<dbReference type="FunFam" id="3.90.1800.10:FF:000001">
    <property type="entry name" value="DNA-directed RNA polymerase subunit beta"/>
    <property type="match status" value="1"/>
</dbReference>
<dbReference type="Gene3D" id="2.40.50.100">
    <property type="match status" value="1"/>
</dbReference>
<dbReference type="Gene3D" id="2.40.50.150">
    <property type="match status" value="1"/>
</dbReference>
<dbReference type="Gene3D" id="3.90.1100.10">
    <property type="match status" value="2"/>
</dbReference>
<dbReference type="Gene3D" id="2.30.150.10">
    <property type="entry name" value="DNA-directed RNA polymerase, beta subunit, external 1 domain"/>
    <property type="match status" value="1"/>
</dbReference>
<dbReference type="Gene3D" id="2.40.270.10">
    <property type="entry name" value="DNA-directed RNA polymerase, subunit 2, domain 6"/>
    <property type="match status" value="1"/>
</dbReference>
<dbReference type="Gene3D" id="3.90.1800.10">
    <property type="entry name" value="RNA polymerase alpha subunit dimerisation domain"/>
    <property type="match status" value="1"/>
</dbReference>
<dbReference type="Gene3D" id="3.90.1110.10">
    <property type="entry name" value="RNA polymerase Rpb2, domain 2"/>
    <property type="match status" value="1"/>
</dbReference>
<dbReference type="HAMAP" id="MF_01321">
    <property type="entry name" value="RNApol_bact_RpoB"/>
    <property type="match status" value="1"/>
</dbReference>
<dbReference type="InterPro" id="IPR042107">
    <property type="entry name" value="DNA-dir_RNA_pol_bsu_ext_1_sf"/>
</dbReference>
<dbReference type="InterPro" id="IPR019462">
    <property type="entry name" value="DNA-dir_RNA_pol_bsu_external_1"/>
</dbReference>
<dbReference type="InterPro" id="IPR015712">
    <property type="entry name" value="DNA-dir_RNA_pol_su2"/>
</dbReference>
<dbReference type="InterPro" id="IPR007120">
    <property type="entry name" value="DNA-dir_RNAP_su2_dom"/>
</dbReference>
<dbReference type="InterPro" id="IPR037033">
    <property type="entry name" value="DNA-dir_RNAP_su2_hyb_sf"/>
</dbReference>
<dbReference type="InterPro" id="IPR010243">
    <property type="entry name" value="RNA_pol_bsu_bac"/>
</dbReference>
<dbReference type="InterPro" id="IPR007121">
    <property type="entry name" value="RNA_pol_bsu_CS"/>
</dbReference>
<dbReference type="InterPro" id="IPR007644">
    <property type="entry name" value="RNA_pol_bsu_protrusion"/>
</dbReference>
<dbReference type="InterPro" id="IPR007642">
    <property type="entry name" value="RNA_pol_Rpb2_2"/>
</dbReference>
<dbReference type="InterPro" id="IPR037034">
    <property type="entry name" value="RNA_pol_Rpb2_2_sf"/>
</dbReference>
<dbReference type="InterPro" id="IPR007645">
    <property type="entry name" value="RNA_pol_Rpb2_3"/>
</dbReference>
<dbReference type="InterPro" id="IPR007641">
    <property type="entry name" value="RNA_pol_Rpb2_7"/>
</dbReference>
<dbReference type="InterPro" id="IPR014724">
    <property type="entry name" value="RNA_pol_RPB2_OB-fold"/>
</dbReference>
<dbReference type="NCBIfam" id="NF001616">
    <property type="entry name" value="PRK00405.1"/>
    <property type="match status" value="1"/>
</dbReference>
<dbReference type="NCBIfam" id="TIGR02013">
    <property type="entry name" value="rpoB"/>
    <property type="match status" value="1"/>
</dbReference>
<dbReference type="PANTHER" id="PTHR20856">
    <property type="entry name" value="DNA-DIRECTED RNA POLYMERASE I SUBUNIT 2"/>
    <property type="match status" value="1"/>
</dbReference>
<dbReference type="Pfam" id="PF04563">
    <property type="entry name" value="RNA_pol_Rpb2_1"/>
    <property type="match status" value="1"/>
</dbReference>
<dbReference type="Pfam" id="PF04561">
    <property type="entry name" value="RNA_pol_Rpb2_2"/>
    <property type="match status" value="2"/>
</dbReference>
<dbReference type="Pfam" id="PF04565">
    <property type="entry name" value="RNA_pol_Rpb2_3"/>
    <property type="match status" value="1"/>
</dbReference>
<dbReference type="Pfam" id="PF10385">
    <property type="entry name" value="RNA_pol_Rpb2_45"/>
    <property type="match status" value="1"/>
</dbReference>
<dbReference type="Pfam" id="PF00562">
    <property type="entry name" value="RNA_pol_Rpb2_6"/>
    <property type="match status" value="1"/>
</dbReference>
<dbReference type="Pfam" id="PF04560">
    <property type="entry name" value="RNA_pol_Rpb2_7"/>
    <property type="match status" value="1"/>
</dbReference>
<dbReference type="SUPFAM" id="SSF64484">
    <property type="entry name" value="beta and beta-prime subunits of DNA dependent RNA-polymerase"/>
    <property type="match status" value="1"/>
</dbReference>
<dbReference type="PROSITE" id="PS01166">
    <property type="entry name" value="RNA_POL_BETA"/>
    <property type="match status" value="1"/>
</dbReference>
<organism>
    <name type="scientific">Geobacillus thermodenitrificans (strain NG80-2)</name>
    <dbReference type="NCBI Taxonomy" id="420246"/>
    <lineage>
        <taxon>Bacteria</taxon>
        <taxon>Bacillati</taxon>
        <taxon>Bacillota</taxon>
        <taxon>Bacilli</taxon>
        <taxon>Bacillales</taxon>
        <taxon>Anoxybacillaceae</taxon>
        <taxon>Geobacillus</taxon>
    </lineage>
</organism>
<name>RPOB_GEOTN</name>
<keyword id="KW-0240">DNA-directed RNA polymerase</keyword>
<keyword id="KW-0548">Nucleotidyltransferase</keyword>
<keyword id="KW-0804">Transcription</keyword>
<keyword id="KW-0808">Transferase</keyword>
<accession>A4IJI1</accession>
<comment type="function">
    <text evidence="1">DNA-dependent RNA polymerase catalyzes the transcription of DNA into RNA using the four ribonucleoside triphosphates as substrates.</text>
</comment>
<comment type="catalytic activity">
    <reaction evidence="1">
        <text>RNA(n) + a ribonucleoside 5'-triphosphate = RNA(n+1) + diphosphate</text>
        <dbReference type="Rhea" id="RHEA:21248"/>
        <dbReference type="Rhea" id="RHEA-COMP:14527"/>
        <dbReference type="Rhea" id="RHEA-COMP:17342"/>
        <dbReference type="ChEBI" id="CHEBI:33019"/>
        <dbReference type="ChEBI" id="CHEBI:61557"/>
        <dbReference type="ChEBI" id="CHEBI:140395"/>
        <dbReference type="EC" id="2.7.7.6"/>
    </reaction>
</comment>
<comment type="subunit">
    <text evidence="1">The RNAP catalytic core consists of 2 alpha, 1 beta, 1 beta' and 1 omega subunit. When a sigma factor is associated with the core the holoenzyme is formed, which can initiate transcription.</text>
</comment>
<comment type="similarity">
    <text evidence="1">Belongs to the RNA polymerase beta chain family.</text>
</comment>
<feature type="chain" id="PRO_0000300321" description="DNA-directed RNA polymerase subunit beta">
    <location>
        <begin position="1"/>
        <end position="1190"/>
    </location>
</feature>
<protein>
    <recommendedName>
        <fullName evidence="1">DNA-directed RNA polymerase subunit beta</fullName>
        <shortName evidence="1">RNAP subunit beta</shortName>
        <ecNumber evidence="1">2.7.7.6</ecNumber>
    </recommendedName>
    <alternativeName>
        <fullName evidence="1">RNA polymerase subunit beta</fullName>
    </alternativeName>
    <alternativeName>
        <fullName evidence="1">Transcriptase subunit beta</fullName>
    </alternativeName>
</protein>
<proteinExistence type="inferred from homology"/>
<gene>
    <name evidence="1" type="primary">rpoB</name>
    <name type="ordered locus">GTNG_0098</name>
</gene>
<reference key="1">
    <citation type="journal article" date="2007" name="Proc. Natl. Acad. Sci. U.S.A.">
        <title>Genome and proteome of long-chain alkane degrading Geobacillus thermodenitrificans NG80-2 isolated from a deep-subsurface oil reservoir.</title>
        <authorList>
            <person name="Feng L."/>
            <person name="Wang W."/>
            <person name="Cheng J."/>
            <person name="Ren Y."/>
            <person name="Zhao G."/>
            <person name="Gao C."/>
            <person name="Tang Y."/>
            <person name="Liu X."/>
            <person name="Han W."/>
            <person name="Peng X."/>
            <person name="Liu R."/>
            <person name="Wang L."/>
        </authorList>
    </citation>
    <scope>NUCLEOTIDE SEQUENCE [LARGE SCALE GENOMIC DNA]</scope>
    <source>
        <strain>NG80-2</strain>
    </source>
</reference>
<evidence type="ECO:0000255" key="1">
    <source>
        <dbReference type="HAMAP-Rule" id="MF_01321"/>
    </source>
</evidence>